<evidence type="ECO:0000269" key="1">
    <source>
    </source>
</evidence>
<evidence type="ECO:0000269" key="2">
    <source>
    </source>
</evidence>
<dbReference type="EMBL" id="CU329670">
    <property type="protein sequence ID" value="CAB16358.1"/>
    <property type="molecule type" value="Genomic_DNA"/>
</dbReference>
<dbReference type="PIR" id="T38011">
    <property type="entry name" value="T38011"/>
</dbReference>
<dbReference type="RefSeq" id="NP_593200.1">
    <property type="nucleotide sequence ID" value="NM_001018596.2"/>
</dbReference>
<dbReference type="PaxDb" id="4896-SPAC1A6.08c.1"/>
<dbReference type="EnsemblFungi" id="SPAC1A6.08c.1">
    <property type="protein sequence ID" value="SPAC1A6.08c.1:pep"/>
    <property type="gene ID" value="SPAC1A6.08c"/>
</dbReference>
<dbReference type="GeneID" id="2542601"/>
<dbReference type="KEGG" id="spo:2542601"/>
<dbReference type="PomBase" id="SPAC1A6.08c">
    <property type="gene designation" value="mug125"/>
</dbReference>
<dbReference type="VEuPathDB" id="FungiDB:SPAC1A6.08c"/>
<dbReference type="HOGENOM" id="CLU_1008875_0_0_1"/>
<dbReference type="InParanoid" id="O13859"/>
<dbReference type="OMA" id="NWEEREP"/>
<dbReference type="PRO" id="PR:O13859"/>
<dbReference type="Proteomes" id="UP000002485">
    <property type="component" value="Chromosome I"/>
</dbReference>
<dbReference type="GO" id="GO:0005737">
    <property type="term" value="C:cytoplasm"/>
    <property type="evidence" value="ECO:0007005"/>
    <property type="project" value="PomBase"/>
</dbReference>
<dbReference type="GO" id="GO:0005829">
    <property type="term" value="C:cytosol"/>
    <property type="evidence" value="ECO:0007005"/>
    <property type="project" value="PomBase"/>
</dbReference>
<dbReference type="GO" id="GO:0005634">
    <property type="term" value="C:nucleus"/>
    <property type="evidence" value="ECO:0007005"/>
    <property type="project" value="PomBase"/>
</dbReference>
<dbReference type="GO" id="GO:0051321">
    <property type="term" value="P:meiotic cell cycle"/>
    <property type="evidence" value="ECO:0007669"/>
    <property type="project" value="UniProtKB-KW"/>
</dbReference>
<sequence length="285" mass="33008">MILKDSLEAKSCFKSSQTSHLAARVAMENPQKGNVINAQSSRQPSSENEFRENLFFKEMRTNGKNEHETSCRSVVLYRNSKSAKRYPLSTKCARISYMQGNKDTKTALTKKYKSNEDVSRMRKKGNKYPQCKSKNLYDSLKLEECIESWSLNQKQNENFYEHTHLNSRDDSNPSSCDRETFFLSDEDSEISLMEGLSSIENGYPDEKETLAALDNVKLSDENAAHLGYLVKYFQNYTDKIILKETLMDWEDKEPSLQELTESTKYLENLADTDHRTSNKPFLFLR</sequence>
<keyword id="KW-0963">Cytoplasm</keyword>
<keyword id="KW-0469">Meiosis</keyword>
<keyword id="KW-0539">Nucleus</keyword>
<keyword id="KW-1185">Reference proteome</keyword>
<protein>
    <recommendedName>
        <fullName>Meiotically up-regulated gene 125 protein</fullName>
    </recommendedName>
</protein>
<name>MU125_SCHPO</name>
<feature type="chain" id="PRO_0000096287" description="Meiotically up-regulated gene 125 protein">
    <location>
        <begin position="1"/>
        <end position="285"/>
    </location>
</feature>
<reference key="1">
    <citation type="journal article" date="2002" name="Nature">
        <title>The genome sequence of Schizosaccharomyces pombe.</title>
        <authorList>
            <person name="Wood V."/>
            <person name="Gwilliam R."/>
            <person name="Rajandream M.A."/>
            <person name="Lyne M.H."/>
            <person name="Lyne R."/>
            <person name="Stewart A."/>
            <person name="Sgouros J.G."/>
            <person name="Peat N."/>
            <person name="Hayles J."/>
            <person name="Baker S.G."/>
            <person name="Basham D."/>
            <person name="Bowman S."/>
            <person name="Brooks K."/>
            <person name="Brown D."/>
            <person name="Brown S."/>
            <person name="Chillingworth T."/>
            <person name="Churcher C.M."/>
            <person name="Collins M."/>
            <person name="Connor R."/>
            <person name="Cronin A."/>
            <person name="Davis P."/>
            <person name="Feltwell T."/>
            <person name="Fraser A."/>
            <person name="Gentles S."/>
            <person name="Goble A."/>
            <person name="Hamlin N."/>
            <person name="Harris D.E."/>
            <person name="Hidalgo J."/>
            <person name="Hodgson G."/>
            <person name="Holroyd S."/>
            <person name="Hornsby T."/>
            <person name="Howarth S."/>
            <person name="Huckle E.J."/>
            <person name="Hunt S."/>
            <person name="Jagels K."/>
            <person name="James K.D."/>
            <person name="Jones L."/>
            <person name="Jones M."/>
            <person name="Leather S."/>
            <person name="McDonald S."/>
            <person name="McLean J."/>
            <person name="Mooney P."/>
            <person name="Moule S."/>
            <person name="Mungall K.L."/>
            <person name="Murphy L.D."/>
            <person name="Niblett D."/>
            <person name="Odell C."/>
            <person name="Oliver K."/>
            <person name="O'Neil S."/>
            <person name="Pearson D."/>
            <person name="Quail M.A."/>
            <person name="Rabbinowitsch E."/>
            <person name="Rutherford K.M."/>
            <person name="Rutter S."/>
            <person name="Saunders D."/>
            <person name="Seeger K."/>
            <person name="Sharp S."/>
            <person name="Skelton J."/>
            <person name="Simmonds M.N."/>
            <person name="Squares R."/>
            <person name="Squares S."/>
            <person name="Stevens K."/>
            <person name="Taylor K."/>
            <person name="Taylor R.G."/>
            <person name="Tivey A."/>
            <person name="Walsh S.V."/>
            <person name="Warren T."/>
            <person name="Whitehead S."/>
            <person name="Woodward J.R."/>
            <person name="Volckaert G."/>
            <person name="Aert R."/>
            <person name="Robben J."/>
            <person name="Grymonprez B."/>
            <person name="Weltjens I."/>
            <person name="Vanstreels E."/>
            <person name="Rieger M."/>
            <person name="Schaefer M."/>
            <person name="Mueller-Auer S."/>
            <person name="Gabel C."/>
            <person name="Fuchs M."/>
            <person name="Duesterhoeft A."/>
            <person name="Fritzc C."/>
            <person name="Holzer E."/>
            <person name="Moestl D."/>
            <person name="Hilbert H."/>
            <person name="Borzym K."/>
            <person name="Langer I."/>
            <person name="Beck A."/>
            <person name="Lehrach H."/>
            <person name="Reinhardt R."/>
            <person name="Pohl T.M."/>
            <person name="Eger P."/>
            <person name="Zimmermann W."/>
            <person name="Wedler H."/>
            <person name="Wambutt R."/>
            <person name="Purnelle B."/>
            <person name="Goffeau A."/>
            <person name="Cadieu E."/>
            <person name="Dreano S."/>
            <person name="Gloux S."/>
            <person name="Lelaure V."/>
            <person name="Mottier S."/>
            <person name="Galibert F."/>
            <person name="Aves S.J."/>
            <person name="Xiang Z."/>
            <person name="Hunt C."/>
            <person name="Moore K."/>
            <person name="Hurst S.M."/>
            <person name="Lucas M."/>
            <person name="Rochet M."/>
            <person name="Gaillardin C."/>
            <person name="Tallada V.A."/>
            <person name="Garzon A."/>
            <person name="Thode G."/>
            <person name="Daga R.R."/>
            <person name="Cruzado L."/>
            <person name="Jimenez J."/>
            <person name="Sanchez M."/>
            <person name="del Rey F."/>
            <person name="Benito J."/>
            <person name="Dominguez A."/>
            <person name="Revuelta J.L."/>
            <person name="Moreno S."/>
            <person name="Armstrong J."/>
            <person name="Forsburg S.L."/>
            <person name="Cerutti L."/>
            <person name="Lowe T."/>
            <person name="McCombie W.R."/>
            <person name="Paulsen I."/>
            <person name="Potashkin J."/>
            <person name="Shpakovski G.V."/>
            <person name="Ussery D."/>
            <person name="Barrell B.G."/>
            <person name="Nurse P."/>
        </authorList>
    </citation>
    <scope>NUCLEOTIDE SEQUENCE [LARGE SCALE GENOMIC DNA]</scope>
    <source>
        <strain>972 / ATCC 24843</strain>
    </source>
</reference>
<reference key="2">
    <citation type="journal article" date="2005" name="Curr. Biol.">
        <title>A large-scale screen in S. pombe identifies seven novel genes required for critical meiotic events.</title>
        <authorList>
            <person name="Martin-Castellanos C."/>
            <person name="Blanco M."/>
            <person name="Rozalen A.E."/>
            <person name="Perez-Hidalgo L."/>
            <person name="Garcia A.I."/>
            <person name="Conde F."/>
            <person name="Mata J."/>
            <person name="Ellermeier C."/>
            <person name="Davis L."/>
            <person name="San-Segundo P."/>
            <person name="Smith G.R."/>
            <person name="Moreno S."/>
        </authorList>
    </citation>
    <scope>FUNCTION IN MEIOSIS</scope>
</reference>
<reference key="3">
    <citation type="journal article" date="2006" name="Nat. Biotechnol.">
        <title>ORFeome cloning and global analysis of protein localization in the fission yeast Schizosaccharomyces pombe.</title>
        <authorList>
            <person name="Matsuyama A."/>
            <person name="Arai R."/>
            <person name="Yashiroda Y."/>
            <person name="Shirai A."/>
            <person name="Kamata A."/>
            <person name="Sekido S."/>
            <person name="Kobayashi Y."/>
            <person name="Hashimoto A."/>
            <person name="Hamamoto M."/>
            <person name="Hiraoka Y."/>
            <person name="Horinouchi S."/>
            <person name="Yoshida M."/>
        </authorList>
    </citation>
    <scope>SUBCELLULAR LOCATION [LARGE SCALE ANALYSIS]</scope>
</reference>
<accession>O13859</accession>
<proteinExistence type="evidence at protein level"/>
<comment type="function">
    <text evidence="1">Has a role in meiosis.</text>
</comment>
<comment type="subcellular location">
    <subcellularLocation>
        <location evidence="2">Cytoplasm</location>
    </subcellularLocation>
    <subcellularLocation>
        <location evidence="2">Nucleus</location>
    </subcellularLocation>
</comment>
<organism>
    <name type="scientific">Schizosaccharomyces pombe (strain 972 / ATCC 24843)</name>
    <name type="common">Fission yeast</name>
    <dbReference type="NCBI Taxonomy" id="284812"/>
    <lineage>
        <taxon>Eukaryota</taxon>
        <taxon>Fungi</taxon>
        <taxon>Dikarya</taxon>
        <taxon>Ascomycota</taxon>
        <taxon>Taphrinomycotina</taxon>
        <taxon>Schizosaccharomycetes</taxon>
        <taxon>Schizosaccharomycetales</taxon>
        <taxon>Schizosaccharomycetaceae</taxon>
        <taxon>Schizosaccharomyces</taxon>
    </lineage>
</organism>
<gene>
    <name type="primary">mug125</name>
    <name type="ORF">SPAC1A6.08c</name>
</gene>